<sequence>MLQLLLAVFIGGGTGSVARWLLSMRFNPLHQAIPLGTLAANLIGAFIIGMGFAWFSRMTNIDPVWKVLITTGFCGGLTTFSTFSAEVVFLLQEGRFGWALLNVFVNLLGSFAMTALAFWLFSASTAH</sequence>
<organism>
    <name type="scientific">Escherichia coli O6:K15:H31 (strain 536 / UPEC)</name>
    <dbReference type="NCBI Taxonomy" id="362663"/>
    <lineage>
        <taxon>Bacteria</taxon>
        <taxon>Pseudomonadati</taxon>
        <taxon>Pseudomonadota</taxon>
        <taxon>Gammaproteobacteria</taxon>
        <taxon>Enterobacterales</taxon>
        <taxon>Enterobacteriaceae</taxon>
        <taxon>Escherichia</taxon>
    </lineage>
</organism>
<reference key="1">
    <citation type="journal article" date="2006" name="Mol. Microbiol.">
        <title>Role of pathogenicity island-associated integrases in the genome plasticity of uropathogenic Escherichia coli strain 536.</title>
        <authorList>
            <person name="Hochhut B."/>
            <person name="Wilde C."/>
            <person name="Balling G."/>
            <person name="Middendorf B."/>
            <person name="Dobrindt U."/>
            <person name="Brzuszkiewicz E."/>
            <person name="Gottschalk G."/>
            <person name="Carniel E."/>
            <person name="Hacker J."/>
        </authorList>
    </citation>
    <scope>NUCLEOTIDE SEQUENCE [LARGE SCALE GENOMIC DNA]</scope>
    <source>
        <strain>536 / UPEC</strain>
    </source>
</reference>
<dbReference type="EMBL" id="CP000247">
    <property type="protein sequence ID" value="ABG68683.1"/>
    <property type="molecule type" value="Genomic_DNA"/>
</dbReference>
<dbReference type="RefSeq" id="WP_000939738.1">
    <property type="nucleotide sequence ID" value="NC_008253.1"/>
</dbReference>
<dbReference type="SMR" id="Q0TK48"/>
<dbReference type="GeneID" id="93776858"/>
<dbReference type="KEGG" id="ecp:ECP_0655"/>
<dbReference type="HOGENOM" id="CLU_114342_3_3_6"/>
<dbReference type="Proteomes" id="UP000009182">
    <property type="component" value="Chromosome"/>
</dbReference>
<dbReference type="GO" id="GO:0005886">
    <property type="term" value="C:plasma membrane"/>
    <property type="evidence" value="ECO:0007669"/>
    <property type="project" value="UniProtKB-SubCell"/>
</dbReference>
<dbReference type="GO" id="GO:0062054">
    <property type="term" value="F:fluoride channel activity"/>
    <property type="evidence" value="ECO:0007669"/>
    <property type="project" value="UniProtKB-UniRule"/>
</dbReference>
<dbReference type="GO" id="GO:0046872">
    <property type="term" value="F:metal ion binding"/>
    <property type="evidence" value="ECO:0007669"/>
    <property type="project" value="UniProtKB-KW"/>
</dbReference>
<dbReference type="GO" id="GO:0140114">
    <property type="term" value="P:cellular detoxification of fluoride"/>
    <property type="evidence" value="ECO:0007669"/>
    <property type="project" value="UniProtKB-UniRule"/>
</dbReference>
<dbReference type="HAMAP" id="MF_00454">
    <property type="entry name" value="FluC"/>
    <property type="match status" value="1"/>
</dbReference>
<dbReference type="InterPro" id="IPR003691">
    <property type="entry name" value="FluC"/>
</dbReference>
<dbReference type="NCBIfam" id="TIGR00494">
    <property type="entry name" value="crcB"/>
    <property type="match status" value="1"/>
</dbReference>
<dbReference type="NCBIfam" id="NF010792">
    <property type="entry name" value="PRK14196.1"/>
    <property type="match status" value="1"/>
</dbReference>
<dbReference type="PANTHER" id="PTHR28259">
    <property type="entry name" value="FLUORIDE EXPORT PROTEIN 1-RELATED"/>
    <property type="match status" value="1"/>
</dbReference>
<dbReference type="PANTHER" id="PTHR28259:SF1">
    <property type="entry name" value="FLUORIDE EXPORT PROTEIN 1-RELATED"/>
    <property type="match status" value="1"/>
</dbReference>
<dbReference type="Pfam" id="PF02537">
    <property type="entry name" value="CRCB"/>
    <property type="match status" value="1"/>
</dbReference>
<keyword id="KW-0997">Cell inner membrane</keyword>
<keyword id="KW-1003">Cell membrane</keyword>
<keyword id="KW-0407">Ion channel</keyword>
<keyword id="KW-0406">Ion transport</keyword>
<keyword id="KW-0472">Membrane</keyword>
<keyword id="KW-0479">Metal-binding</keyword>
<keyword id="KW-0915">Sodium</keyword>
<keyword id="KW-0812">Transmembrane</keyword>
<keyword id="KW-1133">Transmembrane helix</keyword>
<keyword id="KW-0813">Transport</keyword>
<evidence type="ECO:0000255" key="1">
    <source>
        <dbReference type="HAMAP-Rule" id="MF_00454"/>
    </source>
</evidence>
<accession>Q0TK48</accession>
<proteinExistence type="inferred from homology"/>
<comment type="function">
    <text evidence="1">Fluoride-specific ion channel. Important for reducing fluoride concentration in the cell, thus reducing its toxicity.</text>
</comment>
<comment type="catalytic activity">
    <reaction evidence="1">
        <text>fluoride(in) = fluoride(out)</text>
        <dbReference type="Rhea" id="RHEA:76159"/>
        <dbReference type="ChEBI" id="CHEBI:17051"/>
    </reaction>
    <physiologicalReaction direction="left-to-right" evidence="1">
        <dbReference type="Rhea" id="RHEA:76160"/>
    </physiologicalReaction>
</comment>
<comment type="activity regulation">
    <text evidence="1">Na(+) is not transported, but it plays an essential structural role and its presence is essential for fluoride channel function.</text>
</comment>
<comment type="subcellular location">
    <subcellularLocation>
        <location evidence="1">Cell inner membrane</location>
        <topology evidence="1">Multi-pass membrane protein</topology>
    </subcellularLocation>
</comment>
<comment type="similarity">
    <text evidence="1">Belongs to the fluoride channel Fluc/FEX (TC 1.A.43) family.</text>
</comment>
<gene>
    <name evidence="1" type="primary">fluC</name>
    <name evidence="1" type="synonym">crcB</name>
    <name type="ordered locus">ECP_0655</name>
</gene>
<protein>
    <recommendedName>
        <fullName evidence="1">Fluoride-specific ion channel FluC</fullName>
    </recommendedName>
</protein>
<feature type="chain" id="PRO_0000252881" description="Fluoride-specific ion channel FluC">
    <location>
        <begin position="1"/>
        <end position="127"/>
    </location>
</feature>
<feature type="transmembrane region" description="Helical" evidence="1">
    <location>
        <begin position="4"/>
        <end position="24"/>
    </location>
</feature>
<feature type="transmembrane region" description="Helical" evidence="1">
    <location>
        <begin position="35"/>
        <end position="55"/>
    </location>
</feature>
<feature type="transmembrane region" description="Helical" evidence="1">
    <location>
        <begin position="71"/>
        <end position="91"/>
    </location>
</feature>
<feature type="transmembrane region" description="Helical" evidence="1">
    <location>
        <begin position="103"/>
        <end position="123"/>
    </location>
</feature>
<feature type="binding site" evidence="1">
    <location>
        <position position="75"/>
    </location>
    <ligand>
        <name>Na(+)</name>
        <dbReference type="ChEBI" id="CHEBI:29101"/>
        <note>structural</note>
    </ligand>
</feature>
<feature type="binding site" evidence="1">
    <location>
        <position position="78"/>
    </location>
    <ligand>
        <name>Na(+)</name>
        <dbReference type="ChEBI" id="CHEBI:29101"/>
        <note>structural</note>
    </ligand>
</feature>
<name>FLUC_ECOL5</name>